<evidence type="ECO:0000250" key="1"/>
<evidence type="ECO:0000250" key="2">
    <source>
        <dbReference type="UniProtKB" id="P0A884"/>
    </source>
</evidence>
<evidence type="ECO:0000305" key="3"/>
<evidence type="ECO:0007829" key="4">
    <source>
        <dbReference type="PDB" id="5H38"/>
    </source>
</evidence>
<evidence type="ECO:0007829" key="5">
    <source>
        <dbReference type="PDB" id="5H39"/>
    </source>
</evidence>
<evidence type="ECO:0007829" key="6">
    <source>
        <dbReference type="PDB" id="5H3A"/>
    </source>
</evidence>
<organismHost>
    <name type="scientific">Homo sapiens</name>
    <name type="common">Human</name>
    <dbReference type="NCBI Taxonomy" id="9606"/>
</organismHost>
<feature type="chain" id="PRO_0000141065" description="Thymidylate synthase">
    <location>
        <begin position="1"/>
        <end position="337"/>
    </location>
</feature>
<feature type="active site" description="Nucleophile" evidence="2">
    <location>
        <position position="219"/>
    </location>
</feature>
<feature type="binding site" description="in other chain" evidence="2">
    <location>
        <position position="74"/>
    </location>
    <ligand>
        <name>dUMP</name>
        <dbReference type="ChEBI" id="CHEBI:246422"/>
        <note>ligand shared between dimeric partners</note>
    </ligand>
</feature>
<feature type="binding site" evidence="2">
    <location>
        <begin position="199"/>
        <end position="200"/>
    </location>
    <ligand>
        <name>dUMP</name>
        <dbReference type="ChEBI" id="CHEBI:246422"/>
        <note>ligand shared between dimeric partners</note>
    </ligand>
</feature>
<feature type="binding site" description="in other chain" evidence="2">
    <location>
        <begin position="239"/>
        <end position="242"/>
    </location>
    <ligand>
        <name>dUMP</name>
        <dbReference type="ChEBI" id="CHEBI:246422"/>
        <note>ligand shared between dimeric partners</note>
    </ligand>
</feature>
<feature type="binding site" evidence="2">
    <location>
        <position position="242"/>
    </location>
    <ligand>
        <name>(6R)-5,10-methylene-5,6,7,8-tetrahydrofolate</name>
        <dbReference type="ChEBI" id="CHEBI:15636"/>
    </ligand>
</feature>
<feature type="binding site" description="in other chain" evidence="2">
    <location>
        <position position="250"/>
    </location>
    <ligand>
        <name>dUMP</name>
        <dbReference type="ChEBI" id="CHEBI:246422"/>
        <note>ligand shared between dimeric partners</note>
    </ligand>
</feature>
<feature type="binding site" description="in other chain" evidence="2">
    <location>
        <begin position="280"/>
        <end position="282"/>
    </location>
    <ligand>
        <name>dUMP</name>
        <dbReference type="ChEBI" id="CHEBI:246422"/>
        <note>ligand shared between dimeric partners</note>
    </ligand>
</feature>
<feature type="binding site" evidence="2">
    <location>
        <position position="336"/>
    </location>
    <ligand>
        <name>(6R)-5,10-methylene-5,6,7,8-tetrahydrofolate</name>
        <dbReference type="ChEBI" id="CHEBI:15636"/>
    </ligand>
</feature>
<feature type="helix" evidence="4">
    <location>
        <begin position="54"/>
        <end position="67"/>
    </location>
</feature>
<feature type="strand" evidence="4">
    <location>
        <begin position="69"/>
        <end position="72"/>
    </location>
</feature>
<feature type="strand" evidence="4">
    <location>
        <begin position="78"/>
        <end position="90"/>
    </location>
</feature>
<feature type="strand" evidence="4">
    <location>
        <begin position="92"/>
        <end position="94"/>
    </location>
</feature>
<feature type="strand" evidence="6">
    <location>
        <begin position="99"/>
        <end position="101"/>
    </location>
</feature>
<feature type="helix" evidence="4">
    <location>
        <begin position="105"/>
        <end position="116"/>
    </location>
</feature>
<feature type="helix" evidence="4">
    <location>
        <begin position="122"/>
        <end position="126"/>
    </location>
</feature>
<feature type="turn" evidence="4">
    <location>
        <begin position="127"/>
        <end position="129"/>
    </location>
</feature>
<feature type="helix" evidence="4">
    <location>
        <begin position="134"/>
        <end position="137"/>
    </location>
</feature>
<feature type="helix" evidence="4">
    <location>
        <begin position="139"/>
        <end position="145"/>
    </location>
</feature>
<feature type="helix" evidence="4">
    <location>
        <begin position="159"/>
        <end position="165"/>
    </location>
</feature>
<feature type="strand" evidence="6">
    <location>
        <begin position="173"/>
        <end position="175"/>
    </location>
</feature>
<feature type="helix" evidence="4">
    <location>
        <begin position="184"/>
        <end position="194"/>
    </location>
</feature>
<feature type="strand" evidence="4">
    <location>
        <begin position="202"/>
        <end position="204"/>
    </location>
</feature>
<feature type="helix" evidence="4">
    <location>
        <begin position="208"/>
        <end position="213"/>
    </location>
</feature>
<feature type="strand" evidence="4">
    <location>
        <begin position="214"/>
        <end position="216"/>
    </location>
</feature>
<feature type="strand" evidence="4">
    <location>
        <begin position="219"/>
        <end position="228"/>
    </location>
</feature>
<feature type="strand" evidence="4">
    <location>
        <begin position="231"/>
        <end position="242"/>
    </location>
</feature>
<feature type="turn" evidence="4">
    <location>
        <begin position="243"/>
        <end position="246"/>
    </location>
</feature>
<feature type="helix" evidence="4">
    <location>
        <begin position="247"/>
        <end position="265"/>
    </location>
</feature>
<feature type="strand" evidence="4">
    <location>
        <begin position="268"/>
        <end position="282"/>
    </location>
</feature>
<feature type="helix" evidence="4">
    <location>
        <begin position="283"/>
        <end position="285"/>
    </location>
</feature>
<feature type="helix" evidence="4">
    <location>
        <begin position="286"/>
        <end position="292"/>
    </location>
</feature>
<feature type="strand" evidence="4">
    <location>
        <begin position="302"/>
        <end position="305"/>
    </location>
</feature>
<feature type="helix" evidence="5">
    <location>
        <begin position="312"/>
        <end position="314"/>
    </location>
</feature>
<feature type="helix" evidence="4">
    <location>
        <begin position="317"/>
        <end position="319"/>
    </location>
</feature>
<feature type="strand" evidence="4">
    <location>
        <begin position="320"/>
        <end position="323"/>
    </location>
</feature>
<comment type="catalytic activity">
    <reaction>
        <text>dUMP + (6R)-5,10-methylene-5,6,7,8-tetrahydrofolate = 7,8-dihydrofolate + dTMP</text>
        <dbReference type="Rhea" id="RHEA:12104"/>
        <dbReference type="ChEBI" id="CHEBI:15636"/>
        <dbReference type="ChEBI" id="CHEBI:57451"/>
        <dbReference type="ChEBI" id="CHEBI:63528"/>
        <dbReference type="ChEBI" id="CHEBI:246422"/>
        <dbReference type="EC" id="2.1.1.45"/>
    </reaction>
</comment>
<comment type="pathway">
    <text>Pyrimidine metabolism; dTTP biosynthesis.</text>
</comment>
<comment type="subunit">
    <text evidence="1">Homodimer.</text>
</comment>
<comment type="similarity">
    <text evidence="3">Belongs to the thymidylate synthase family.</text>
</comment>
<gene>
    <name type="primary">70</name>
</gene>
<reference key="1">
    <citation type="journal article" date="1996" name="Proc. Natl. Acad. Sci. U.S.A.">
        <title>Nucleotide sequence of the Kaposi sarcoma-associated herpesvirus (HHV8).</title>
        <authorList>
            <person name="Russo J.J."/>
            <person name="Bohenzky R.A."/>
            <person name="Chien M.-C."/>
            <person name="Chen J."/>
            <person name="Yan M."/>
            <person name="Maddalena D."/>
            <person name="Parry J.P."/>
            <person name="Peruzzi D."/>
            <person name="Edelman I.S."/>
            <person name="Chang Y."/>
            <person name="Moore P.S."/>
        </authorList>
    </citation>
    <scope>NUCLEOTIDE SEQUENCE [GENOMIC DNA]</scope>
</reference>
<reference key="2">
    <citation type="journal article" date="1997" name="J. Virol.">
        <title>Cell-homologous genes in the Kaposi's sarcoma-associated rhadinovirus human herpesvirus 8: determinants of its pathogenicity?</title>
        <authorList>
            <person name="Neipel F."/>
            <person name="Albrecht J.-C."/>
            <person name="Fleckenstein B."/>
        </authorList>
    </citation>
    <scope>NUCLEOTIDE SEQUENCE [GENOMIC DNA]</scope>
</reference>
<reference key="3">
    <citation type="journal article" date="2006" name="J. Gen. Virol.">
        <title>Kaposi's sarcoma-associated herpesvirus immune modulation: an overview.</title>
        <authorList>
            <person name="Rezaee S.A.R."/>
            <person name="Cunningham C."/>
            <person name="Davison A.J."/>
            <person name="Blackbourn D.J."/>
        </authorList>
    </citation>
    <scope>NUCLEOTIDE SEQUENCE [LARGE SCALE GENOMIC DNA]</scope>
</reference>
<name>TYSY_HHV8P</name>
<accession>P90463</accession>
<accession>D0UZM0</accession>
<accession>Q2HRC4</accession>
<sequence length="337" mass="38555">MFPFVPLSLYVAKKLFRARGFRFCQKPGVLALAPEVDPCSIQHEVTGAETPHEELQYLRQLREILCRGSDRLDRTGIGTLSLFGMQARYSLRDHFPLLTTKRVFWRGVVQELLWFLKGSTDSRELSRTGVKIWDKNGSREFLAGRGLAHRREGDLGPVYGFQWRHFGAAYVDADADYTGQGFDQLSYIVDLIKNNPHDRRIIMCAWNPADLSLMALPPCHLLCQFYVADGELSCQLYQRSGDMGLGVPFNIASYSLLTYMLAHVTGLRPGEFIHTLGDAHIYKTHIEPLRLQLTRTPRPFPRLEILRSVSSMEEFTPDDFRLVDYCPHPTIRMEMAV</sequence>
<keyword id="KW-0002">3D-structure</keyword>
<keyword id="KW-0489">Methyltransferase</keyword>
<keyword id="KW-0545">Nucleotide biosynthesis</keyword>
<keyword id="KW-1185">Reference proteome</keyword>
<keyword id="KW-0808">Transferase</keyword>
<protein>
    <recommendedName>
        <fullName>Thymidylate synthase</fullName>
        <shortName>TS</shortName>
        <shortName>TSase</shortName>
        <ecNumber>2.1.1.45</ecNumber>
    </recommendedName>
</protein>
<dbReference type="EC" id="2.1.1.45"/>
<dbReference type="EMBL" id="U75698">
    <property type="protein sequence ID" value="AAC57092.1"/>
    <property type="molecule type" value="Genomic_DNA"/>
</dbReference>
<dbReference type="EMBL" id="U83348">
    <property type="protein sequence ID" value="AAC56948.1"/>
    <property type="molecule type" value="Genomic_DNA"/>
</dbReference>
<dbReference type="EMBL" id="U93872">
    <property type="protein sequence ID" value="AAB62673.1"/>
    <property type="molecule type" value="Genomic_DNA"/>
</dbReference>
<dbReference type="EMBL" id="U71365">
    <property type="protein sequence ID" value="AAC34940.1"/>
    <property type="molecule type" value="Genomic_DNA"/>
</dbReference>
<dbReference type="EMBL" id="AF148805">
    <property type="protein sequence ID" value="ABD28859.1"/>
    <property type="molecule type" value="Genomic_DNA"/>
</dbReference>
<dbReference type="PDB" id="5H38">
    <property type="method" value="X-ray"/>
    <property type="resolution" value="1.70 A"/>
    <property type="chains" value="A/B=51-334"/>
</dbReference>
<dbReference type="PDB" id="5H39">
    <property type="method" value="X-ray"/>
    <property type="resolution" value="2.00 A"/>
    <property type="chains" value="A/B=51-335"/>
</dbReference>
<dbReference type="PDB" id="5H3A">
    <property type="method" value="X-ray"/>
    <property type="resolution" value="2.40 A"/>
    <property type="chains" value="A/B=51-333"/>
</dbReference>
<dbReference type="PDBsum" id="5H38"/>
<dbReference type="PDBsum" id="5H39"/>
<dbReference type="PDBsum" id="5H3A"/>
<dbReference type="SMR" id="P90463"/>
<dbReference type="BioGRID" id="1776984">
    <property type="interactions" value="10"/>
</dbReference>
<dbReference type="DNASU" id="4961481"/>
<dbReference type="KEGG" id="vg:4961481"/>
<dbReference type="UniPathway" id="UPA00575"/>
<dbReference type="Proteomes" id="UP000000942">
    <property type="component" value="Segment"/>
</dbReference>
<dbReference type="GO" id="GO:0004799">
    <property type="term" value="F:thymidylate synthase activity"/>
    <property type="evidence" value="ECO:0007669"/>
    <property type="project" value="UniProtKB-EC"/>
</dbReference>
<dbReference type="GO" id="GO:0006231">
    <property type="term" value="P:dTMP biosynthetic process"/>
    <property type="evidence" value="ECO:0007669"/>
    <property type="project" value="InterPro"/>
</dbReference>
<dbReference type="GO" id="GO:0006235">
    <property type="term" value="P:dTTP biosynthetic process"/>
    <property type="evidence" value="ECO:0007669"/>
    <property type="project" value="UniProtKB-UniPathway"/>
</dbReference>
<dbReference type="GO" id="GO:0032259">
    <property type="term" value="P:methylation"/>
    <property type="evidence" value="ECO:0007669"/>
    <property type="project" value="UniProtKB-KW"/>
</dbReference>
<dbReference type="CDD" id="cd00351">
    <property type="entry name" value="TS_Pyrimidine_HMase"/>
    <property type="match status" value="1"/>
</dbReference>
<dbReference type="FunFam" id="3.30.572.10:FF:000002">
    <property type="entry name" value="Possible thymidylate synthase"/>
    <property type="match status" value="1"/>
</dbReference>
<dbReference type="Gene3D" id="3.30.572.10">
    <property type="entry name" value="Thymidylate synthase/dCMP hydroxymethylase domain"/>
    <property type="match status" value="1"/>
</dbReference>
<dbReference type="HAMAP" id="MF_00008">
    <property type="entry name" value="Thymidy_synth_bact"/>
    <property type="match status" value="1"/>
</dbReference>
<dbReference type="InterPro" id="IPR045097">
    <property type="entry name" value="Thymidate_synth/dCMP_Mease"/>
</dbReference>
<dbReference type="InterPro" id="IPR023451">
    <property type="entry name" value="Thymidate_synth/dCMP_Mease_dom"/>
</dbReference>
<dbReference type="InterPro" id="IPR036926">
    <property type="entry name" value="Thymidate_synth/dCMP_Mease_sf"/>
</dbReference>
<dbReference type="InterPro" id="IPR000398">
    <property type="entry name" value="Thymidylate_synthase"/>
</dbReference>
<dbReference type="InterPro" id="IPR020940">
    <property type="entry name" value="Thymidylate_synthase_AS"/>
</dbReference>
<dbReference type="NCBIfam" id="NF002497">
    <property type="entry name" value="PRK01827.1-3"/>
    <property type="match status" value="1"/>
</dbReference>
<dbReference type="NCBIfam" id="TIGR03284">
    <property type="entry name" value="thym_sym"/>
    <property type="match status" value="1"/>
</dbReference>
<dbReference type="PANTHER" id="PTHR11548:SF2">
    <property type="entry name" value="THYMIDYLATE SYNTHASE"/>
    <property type="match status" value="1"/>
</dbReference>
<dbReference type="PANTHER" id="PTHR11548">
    <property type="entry name" value="THYMIDYLATE SYNTHASE 1"/>
    <property type="match status" value="1"/>
</dbReference>
<dbReference type="Pfam" id="PF00303">
    <property type="entry name" value="Thymidylat_synt"/>
    <property type="match status" value="1"/>
</dbReference>
<dbReference type="PRINTS" id="PR00108">
    <property type="entry name" value="THYMDSNTHASE"/>
</dbReference>
<dbReference type="SUPFAM" id="SSF55831">
    <property type="entry name" value="Thymidylate synthase/dCMP hydroxymethylase"/>
    <property type="match status" value="1"/>
</dbReference>
<dbReference type="PROSITE" id="PS00091">
    <property type="entry name" value="THYMIDYLATE_SYNTHASE"/>
    <property type="match status" value="1"/>
</dbReference>
<organism>
    <name type="scientific">Human herpesvirus 8 type P (isolate GK18)</name>
    <name type="common">HHV-8</name>
    <name type="synonym">Kaposi's sarcoma-associated herpesvirus</name>
    <dbReference type="NCBI Taxonomy" id="868565"/>
    <lineage>
        <taxon>Viruses</taxon>
        <taxon>Duplodnaviria</taxon>
        <taxon>Heunggongvirae</taxon>
        <taxon>Peploviricota</taxon>
        <taxon>Herviviricetes</taxon>
        <taxon>Herpesvirales</taxon>
        <taxon>Orthoherpesviridae</taxon>
        <taxon>Gammaherpesvirinae</taxon>
        <taxon>Rhadinovirus</taxon>
        <taxon>Rhadinovirus humangamma8</taxon>
        <taxon>Human herpesvirus 8</taxon>
    </lineage>
</organism>
<proteinExistence type="evidence at protein level"/>